<feature type="chain" id="PRO_0000110377" description="NAD-dependent protein deacylase 1">
    <location>
        <begin position="1"/>
        <end position="245"/>
    </location>
</feature>
<feature type="domain" description="Deacetylase sirtuin-type" evidence="2">
    <location>
        <begin position="1"/>
        <end position="243"/>
    </location>
</feature>
<feature type="active site" description="Proton acceptor" evidence="2">
    <location>
        <position position="116"/>
    </location>
</feature>
<feature type="binding site" evidence="1 4">
    <location>
        <begin position="20"/>
        <end position="39"/>
    </location>
    <ligand>
        <name>NAD(+)</name>
        <dbReference type="ChEBI" id="CHEBI:57540"/>
    </ligand>
</feature>
<feature type="binding site" evidence="1">
    <location>
        <position position="64"/>
    </location>
    <ligand>
        <name>substrate</name>
    </ligand>
</feature>
<feature type="binding site" evidence="1">
    <location>
        <position position="67"/>
    </location>
    <ligand>
        <name>substrate</name>
    </ligand>
</feature>
<feature type="binding site" evidence="1 4">
    <location>
        <begin position="98"/>
        <end position="101"/>
    </location>
    <ligand>
        <name>NAD(+)</name>
        <dbReference type="ChEBI" id="CHEBI:57540"/>
    </ligand>
</feature>
<feature type="binding site" evidence="1 4 5">
    <location>
        <position position="124"/>
    </location>
    <ligand>
        <name>Zn(2+)</name>
        <dbReference type="ChEBI" id="CHEBI:29105"/>
    </ligand>
</feature>
<feature type="binding site" evidence="1 4 5">
    <location>
        <position position="127"/>
    </location>
    <ligand>
        <name>Zn(2+)</name>
        <dbReference type="ChEBI" id="CHEBI:29105"/>
    </ligand>
</feature>
<feature type="binding site" evidence="1 4 5">
    <location>
        <position position="145"/>
    </location>
    <ligand>
        <name>Zn(2+)</name>
        <dbReference type="ChEBI" id="CHEBI:29105"/>
    </ligand>
</feature>
<feature type="binding site" evidence="1 4 5">
    <location>
        <position position="148"/>
    </location>
    <ligand>
        <name>Zn(2+)</name>
        <dbReference type="ChEBI" id="CHEBI:29105"/>
    </ligand>
</feature>
<feature type="binding site" evidence="1 4">
    <location>
        <begin position="185"/>
        <end position="187"/>
    </location>
    <ligand>
        <name>NAD(+)</name>
        <dbReference type="ChEBI" id="CHEBI:57540"/>
    </ligand>
</feature>
<feature type="binding site" evidence="1 4">
    <location>
        <begin position="211"/>
        <end position="213"/>
    </location>
    <ligand>
        <name>NAD(+)</name>
        <dbReference type="ChEBI" id="CHEBI:57540"/>
    </ligand>
</feature>
<feature type="binding site" evidence="1 4">
    <location>
        <position position="229"/>
    </location>
    <ligand>
        <name>NAD(+)</name>
        <dbReference type="ChEBI" id="CHEBI:57540"/>
    </ligand>
</feature>
<feature type="mutagenesis site" description="Reduces activity 6-fold. Reduces affinity for NAD 10-fold." evidence="5">
    <original>S</original>
    <variation>A</variation>
    <location>
        <position position="24"/>
    </location>
</feature>
<feature type="mutagenesis site" description="Reduces activity by 20%." evidence="5">
    <original>R</original>
    <variation>A</variation>
    <location>
        <position position="33"/>
    </location>
</feature>
<feature type="mutagenesis site" description="No effect." evidence="5">
    <original>E</original>
    <variation>A</variation>
    <location>
        <position position="45"/>
    </location>
</feature>
<feature type="mutagenesis site" description="Slightly reduces affinity for NAD." evidence="5">
    <original>H</original>
    <variation>N</variation>
    <location>
        <position position="80"/>
    </location>
</feature>
<feature type="mutagenesis site" description="Reduces activity 80-fold. Reduces affinity for NAD 10-fold." evidence="5">
    <original>D</original>
    <variation>N</variation>
    <location>
        <position position="101"/>
    </location>
</feature>
<feature type="mutagenesis site" description="Reduces activity 30-fold." evidence="5">
    <original>H</original>
    <variation>D</variation>
    <variation>N</variation>
    <location>
        <position position="116"/>
    </location>
</feature>
<feature type="mutagenesis site" description="Reduces activity 20-fold." evidence="5">
    <original>F</original>
    <variation>A</variation>
    <location>
        <position position="159"/>
    </location>
</feature>
<feature type="mutagenesis site" description="Change in substrate affinity; when associated with Y-191 and M-216." evidence="6">
    <original>M</original>
    <variation>P</variation>
    <location>
        <position position="162"/>
    </location>
</feature>
<feature type="mutagenesis site" description="Change in substrate affinity; when associated with P-162 and M-216." evidence="6">
    <original>Q</original>
    <variation>Y</variation>
    <location>
        <position position="191"/>
    </location>
</feature>
<feature type="mutagenesis site" description="Change in substrate affinity; when associated with P-162 and Y-191." evidence="6">
    <original>P</original>
    <variation>M</variation>
    <location>
        <position position="216"/>
    </location>
</feature>
<feature type="helix" evidence="8">
    <location>
        <begin position="3"/>
        <end position="10"/>
    </location>
</feature>
<feature type="strand" evidence="8">
    <location>
        <begin position="13"/>
        <end position="19"/>
    </location>
</feature>
<feature type="helix" evidence="8">
    <location>
        <begin position="21"/>
        <end position="27"/>
    </location>
</feature>
<feature type="strand" evidence="8">
    <location>
        <begin position="32"/>
        <end position="34"/>
    </location>
</feature>
<feature type="helix" evidence="9">
    <location>
        <begin position="35"/>
        <end position="37"/>
    </location>
</feature>
<feature type="helix" evidence="8">
    <location>
        <begin position="38"/>
        <end position="41"/>
    </location>
</feature>
<feature type="helix" evidence="8">
    <location>
        <begin position="44"/>
        <end position="47"/>
    </location>
</feature>
<feature type="helix" evidence="8">
    <location>
        <begin position="50"/>
        <end position="55"/>
    </location>
</feature>
<feature type="helix" evidence="8">
    <location>
        <begin position="57"/>
        <end position="73"/>
    </location>
</feature>
<feature type="helix" evidence="8">
    <location>
        <begin position="78"/>
        <end position="88"/>
    </location>
</feature>
<feature type="strand" evidence="8">
    <location>
        <begin position="92"/>
        <end position="97"/>
    </location>
</feature>
<feature type="helix" evidence="8">
    <location>
        <begin position="103"/>
        <end position="106"/>
    </location>
</feature>
<feature type="strand" evidence="8">
    <location>
        <begin position="111"/>
        <end position="114"/>
    </location>
</feature>
<feature type="strand" evidence="8">
    <location>
        <begin position="117"/>
        <end position="128"/>
    </location>
</feature>
<feature type="strand" evidence="8">
    <location>
        <begin position="130"/>
        <end position="132"/>
    </location>
</feature>
<feature type="strand" evidence="8">
    <location>
        <begin position="139"/>
        <end position="141"/>
    </location>
</feature>
<feature type="strand" evidence="8">
    <location>
        <begin position="146"/>
        <end position="156"/>
    </location>
</feature>
<feature type="helix" evidence="8">
    <location>
        <begin position="165"/>
        <end position="177"/>
    </location>
</feature>
<feature type="strand" evidence="8">
    <location>
        <begin position="179"/>
        <end position="185"/>
    </location>
</feature>
<feature type="helix" evidence="8">
    <location>
        <begin position="193"/>
        <end position="195"/>
    </location>
</feature>
<feature type="helix" evidence="8">
    <location>
        <begin position="196"/>
        <end position="202"/>
    </location>
</feature>
<feature type="strand" evidence="8">
    <location>
        <begin position="206"/>
        <end position="210"/>
    </location>
</feature>
<feature type="helix" evidence="8">
    <location>
        <begin position="218"/>
        <end position="220"/>
    </location>
</feature>
<feature type="strand" evidence="8">
    <location>
        <begin position="222"/>
        <end position="225"/>
    </location>
</feature>
<feature type="helix" evidence="8">
    <location>
        <begin position="229"/>
        <end position="245"/>
    </location>
</feature>
<name>NPD1_ARCFU</name>
<dbReference type="EC" id="2.3.1.286" evidence="1 2"/>
<dbReference type="EMBL" id="AE000782">
    <property type="protein sequence ID" value="AAB89569.1"/>
    <property type="molecule type" value="Genomic_DNA"/>
</dbReference>
<dbReference type="PIR" id="C69459">
    <property type="entry name" value="C69459"/>
</dbReference>
<dbReference type="RefSeq" id="WP_010879172.1">
    <property type="nucleotide sequence ID" value="NC_000917.1"/>
</dbReference>
<dbReference type="PDB" id="1ICI">
    <property type="method" value="X-ray"/>
    <property type="resolution" value="2.10 A"/>
    <property type="chains" value="A/B=1-245"/>
</dbReference>
<dbReference type="PDB" id="1M2G">
    <property type="method" value="X-ray"/>
    <property type="resolution" value="1.70 A"/>
    <property type="chains" value="A=1-245"/>
</dbReference>
<dbReference type="PDB" id="1M2H">
    <property type="method" value="X-ray"/>
    <property type="resolution" value="1.80 A"/>
    <property type="chains" value="A=1-245"/>
</dbReference>
<dbReference type="PDB" id="1M2J">
    <property type="method" value="X-ray"/>
    <property type="resolution" value="1.70 A"/>
    <property type="chains" value="A=1-245"/>
</dbReference>
<dbReference type="PDB" id="1M2K">
    <property type="method" value="X-ray"/>
    <property type="resolution" value="1.47 A"/>
    <property type="chains" value="A=1-245"/>
</dbReference>
<dbReference type="PDB" id="1M2N">
    <property type="method" value="X-ray"/>
    <property type="resolution" value="2.60 A"/>
    <property type="chains" value="A/B=1-245"/>
</dbReference>
<dbReference type="PDB" id="4TWI">
    <property type="method" value="X-ray"/>
    <property type="resolution" value="1.79 A"/>
    <property type="chains" value="A=1-245"/>
</dbReference>
<dbReference type="PDBsum" id="1ICI"/>
<dbReference type="PDBsum" id="1M2G"/>
<dbReference type="PDBsum" id="1M2H"/>
<dbReference type="PDBsum" id="1M2J"/>
<dbReference type="PDBsum" id="1M2K"/>
<dbReference type="PDBsum" id="1M2N"/>
<dbReference type="PDBsum" id="4TWI"/>
<dbReference type="SMR" id="O28597"/>
<dbReference type="STRING" id="224325.AF_1676"/>
<dbReference type="PaxDb" id="224325-AF_1676"/>
<dbReference type="EnsemblBacteria" id="AAB89569">
    <property type="protein sequence ID" value="AAB89569"/>
    <property type="gene ID" value="AF_1676"/>
</dbReference>
<dbReference type="GeneID" id="24795419"/>
<dbReference type="KEGG" id="afu:AF_1676"/>
<dbReference type="eggNOG" id="arCOG04248">
    <property type="taxonomic scope" value="Archaea"/>
</dbReference>
<dbReference type="HOGENOM" id="CLU_023643_3_1_2"/>
<dbReference type="OrthoDB" id="728at2157"/>
<dbReference type="PhylomeDB" id="O28597"/>
<dbReference type="BRENDA" id="2.3.1.286">
    <property type="organism ID" value="414"/>
</dbReference>
<dbReference type="BRENDA" id="2.3.1.B43">
    <property type="organism ID" value="414"/>
</dbReference>
<dbReference type="EvolutionaryTrace" id="O28597"/>
<dbReference type="Proteomes" id="UP000002199">
    <property type="component" value="Chromosome"/>
</dbReference>
<dbReference type="GO" id="GO:0005737">
    <property type="term" value="C:cytoplasm"/>
    <property type="evidence" value="ECO:0007669"/>
    <property type="project" value="UniProtKB-SubCell"/>
</dbReference>
<dbReference type="GO" id="GO:0017136">
    <property type="term" value="F:histone deacetylase activity, NAD-dependent"/>
    <property type="evidence" value="ECO:0007669"/>
    <property type="project" value="TreeGrafter"/>
</dbReference>
<dbReference type="GO" id="GO:0070403">
    <property type="term" value="F:NAD+ binding"/>
    <property type="evidence" value="ECO:0007669"/>
    <property type="project" value="UniProtKB-UniRule"/>
</dbReference>
<dbReference type="GO" id="GO:0036054">
    <property type="term" value="F:protein-malonyllysine demalonylase activity"/>
    <property type="evidence" value="ECO:0007669"/>
    <property type="project" value="InterPro"/>
</dbReference>
<dbReference type="GO" id="GO:0036055">
    <property type="term" value="F:protein-succinyllysine desuccinylase activity"/>
    <property type="evidence" value="ECO:0007669"/>
    <property type="project" value="UniProtKB-UniRule"/>
</dbReference>
<dbReference type="GO" id="GO:0008270">
    <property type="term" value="F:zinc ion binding"/>
    <property type="evidence" value="ECO:0007669"/>
    <property type="project" value="UniProtKB-UniRule"/>
</dbReference>
<dbReference type="CDD" id="cd01412">
    <property type="entry name" value="SIRT5_Af1_CobB"/>
    <property type="match status" value="1"/>
</dbReference>
<dbReference type="Gene3D" id="3.30.1600.10">
    <property type="entry name" value="SIR2/SIRT2 'Small Domain"/>
    <property type="match status" value="1"/>
</dbReference>
<dbReference type="Gene3D" id="3.40.50.1220">
    <property type="entry name" value="TPP-binding domain"/>
    <property type="match status" value="1"/>
</dbReference>
<dbReference type="HAMAP" id="MF_01121">
    <property type="entry name" value="Sirtuin_ClassIII"/>
    <property type="match status" value="1"/>
</dbReference>
<dbReference type="InterPro" id="IPR029035">
    <property type="entry name" value="DHS-like_NAD/FAD-binding_dom"/>
</dbReference>
<dbReference type="InterPro" id="IPR050134">
    <property type="entry name" value="NAD-dep_sirtuin_deacylases"/>
</dbReference>
<dbReference type="InterPro" id="IPR003000">
    <property type="entry name" value="Sirtuin"/>
</dbReference>
<dbReference type="InterPro" id="IPR026591">
    <property type="entry name" value="Sirtuin_cat_small_dom_sf"/>
</dbReference>
<dbReference type="InterPro" id="IPR027546">
    <property type="entry name" value="Sirtuin_class_III"/>
</dbReference>
<dbReference type="InterPro" id="IPR026590">
    <property type="entry name" value="Ssirtuin_cat_dom"/>
</dbReference>
<dbReference type="NCBIfam" id="NF001753">
    <property type="entry name" value="PRK00481.1-3"/>
    <property type="match status" value="1"/>
</dbReference>
<dbReference type="NCBIfam" id="NF040867">
    <property type="entry name" value="prot_deacyl_CobB"/>
    <property type="match status" value="1"/>
</dbReference>
<dbReference type="PANTHER" id="PTHR11085">
    <property type="entry name" value="NAD-DEPENDENT PROTEIN DEACYLASE SIRTUIN-5, MITOCHONDRIAL-RELATED"/>
    <property type="match status" value="1"/>
</dbReference>
<dbReference type="PANTHER" id="PTHR11085:SF10">
    <property type="entry name" value="NAD-DEPENDENT PROTEIN DEACYLASE SIRTUIN-5, MITOCHONDRIAL-RELATED"/>
    <property type="match status" value="1"/>
</dbReference>
<dbReference type="Pfam" id="PF02146">
    <property type="entry name" value="SIR2"/>
    <property type="match status" value="1"/>
</dbReference>
<dbReference type="SUPFAM" id="SSF52467">
    <property type="entry name" value="DHS-like NAD/FAD-binding domain"/>
    <property type="match status" value="1"/>
</dbReference>
<dbReference type="PROSITE" id="PS50305">
    <property type="entry name" value="SIRTUIN"/>
    <property type="match status" value="1"/>
</dbReference>
<reference key="1">
    <citation type="journal article" date="1997" name="Nature">
        <title>The complete genome sequence of the hyperthermophilic, sulphate-reducing archaeon Archaeoglobus fulgidus.</title>
        <authorList>
            <person name="Klenk H.-P."/>
            <person name="Clayton R.A."/>
            <person name="Tomb J.-F."/>
            <person name="White O."/>
            <person name="Nelson K.E."/>
            <person name="Ketchum K.A."/>
            <person name="Dodson R.J."/>
            <person name="Gwinn M.L."/>
            <person name="Hickey E.K."/>
            <person name="Peterson J.D."/>
            <person name="Richardson D.L."/>
            <person name="Kerlavage A.R."/>
            <person name="Graham D.E."/>
            <person name="Kyrpides N.C."/>
            <person name="Fleischmann R.D."/>
            <person name="Quackenbush J."/>
            <person name="Lee N.H."/>
            <person name="Sutton G.G."/>
            <person name="Gill S.R."/>
            <person name="Kirkness E.F."/>
            <person name="Dougherty B.A."/>
            <person name="McKenney K."/>
            <person name="Adams M.D."/>
            <person name="Loftus B.J."/>
            <person name="Peterson S.N."/>
            <person name="Reich C.I."/>
            <person name="McNeil L.K."/>
            <person name="Badger J.H."/>
            <person name="Glodek A."/>
            <person name="Zhou L."/>
            <person name="Overbeek R."/>
            <person name="Gocayne J.D."/>
            <person name="Weidman J.F."/>
            <person name="McDonald L.A."/>
            <person name="Utterback T.R."/>
            <person name="Cotton M.D."/>
            <person name="Spriggs T."/>
            <person name="Artiach P."/>
            <person name="Kaine B.P."/>
            <person name="Sykes S.M."/>
            <person name="Sadow P.W."/>
            <person name="D'Andrea K.P."/>
            <person name="Bowman C."/>
            <person name="Fujii C."/>
            <person name="Garland S.A."/>
            <person name="Mason T.M."/>
            <person name="Olsen G.J."/>
            <person name="Fraser C.M."/>
            <person name="Smith H.O."/>
            <person name="Woese C.R."/>
            <person name="Venter J.C."/>
        </authorList>
    </citation>
    <scope>NUCLEOTIDE SEQUENCE [LARGE SCALE GENOMIC DNA]</scope>
    <source>
        <strain>ATCC 49558 / DSM 4304 / JCM 9628 / NBRC 100126 / VC-16</strain>
    </source>
</reference>
<reference key="2">
    <citation type="journal article" date="2000" name="Proc. Natl. Acad. Sci. U.S.A.">
        <title>A phylogenetically conserved NAD+-dependent protein deacetylase activity in the Sir2 protein family.</title>
        <authorList>
            <person name="Smith J.S."/>
            <person name="Brachmann C.B."/>
            <person name="Celic I."/>
            <person name="Kenna M.A."/>
            <person name="Muhammad S."/>
            <person name="Starai V.J."/>
            <person name="Avalos J.L."/>
            <person name="Escalante-Semerena J.C."/>
            <person name="Grubmeyer C."/>
            <person name="Wolberger C."/>
            <person name="Boeke J.D."/>
        </authorList>
    </citation>
    <scope>FUNCTION AS A NAD-DEPENDENT DEACETYLASE</scope>
</reference>
<reference key="3">
    <citation type="journal article" date="2002" name="Mol. Cell">
        <title>Structure of a Sir2 enzyme bound to an acetylated p53 peptide.</title>
        <authorList>
            <person name="Avalos J.L."/>
            <person name="Celic I."/>
            <person name="Muhammad S."/>
            <person name="Cosgrove M.S."/>
            <person name="Boeke J.D."/>
            <person name="Wolberger C."/>
        </authorList>
    </citation>
    <scope>MUTAGENESIS OF MET-162; GLN-191 AND PRO-216</scope>
</reference>
<reference key="4">
    <citation type="journal article" date="2001" name="Cell">
        <title>Deciphering NAD-dependent deacetylases.</title>
        <authorList>
            <person name="Dutnall R.N."/>
            <person name="Pillus L."/>
        </authorList>
    </citation>
    <scope>REVIEW</scope>
</reference>
<reference key="5">
    <citation type="journal article" date="2001" name="Cell">
        <title>Crystal structure of a SIR2 homolog-NAD complex.</title>
        <authorList>
            <person name="Min J."/>
            <person name="Landry J."/>
            <person name="Sternglanz R."/>
            <person name="Xu R.-M."/>
        </authorList>
    </citation>
    <scope>X-RAY CRYSTALLOGRAPHY (2.10 ANGSTROMS) IN COMPLEX WITH NAD AND ZINC</scope>
    <scope>COFACTOR</scope>
    <source>
        <strain>ATCC 49558 / DSM 4304 / JCM 9628 / NBRC 100126 / VC-16</strain>
    </source>
</reference>
<reference key="6">
    <citation type="journal article" date="2002" name="J. Biol. Chem.">
        <title>Structural basis for the NAD-dependent deacetylase mechanism of Sir2.</title>
        <authorList>
            <person name="Chang J.-H."/>
            <person name="Kim H.-C."/>
            <person name="Hwang K.-Y."/>
            <person name="Lee J.-W."/>
            <person name="Jackson S.P."/>
            <person name="Bell S.D."/>
            <person name="Cho Y."/>
        </authorList>
    </citation>
    <scope>X-RAY CRYSTALLOGRAPHY (1.47 ANGSTROMS) IN COMPLEX WITH ZINC AND ADP-RIBOSE</scope>
    <scope>COFACTOR</scope>
    <scope>MUTAGENESIS OF SER-24; ARG-33; GLU-45; HIS-80; ASP-101; HIS-116 AND PHE-159</scope>
</reference>
<proteinExistence type="evidence at protein level"/>
<comment type="function">
    <text evidence="1 3">NAD-dependent lysine deacetylase and desuccinylase that specifically removes acetyl and succinyl groups on target proteins. Modulates the activities of several proteins which are inactive in their acylated form. Deacetylates the N-terminal lysine residue of Alba, the major archaeal chromatin protein and that, in turn, increases Alba's DNA binding affinity, thereby repressing transcription.</text>
</comment>
<comment type="catalytic activity">
    <reaction evidence="1">
        <text>N(6)-acetyl-L-lysyl-[protein] + NAD(+) + H2O = 2''-O-acetyl-ADP-D-ribose + nicotinamide + L-lysyl-[protein]</text>
        <dbReference type="Rhea" id="RHEA:43636"/>
        <dbReference type="Rhea" id="RHEA-COMP:9752"/>
        <dbReference type="Rhea" id="RHEA-COMP:10731"/>
        <dbReference type="ChEBI" id="CHEBI:15377"/>
        <dbReference type="ChEBI" id="CHEBI:17154"/>
        <dbReference type="ChEBI" id="CHEBI:29969"/>
        <dbReference type="ChEBI" id="CHEBI:57540"/>
        <dbReference type="ChEBI" id="CHEBI:61930"/>
        <dbReference type="ChEBI" id="CHEBI:83767"/>
        <dbReference type="EC" id="2.3.1.286"/>
    </reaction>
</comment>
<comment type="catalytic activity">
    <reaction evidence="1">
        <text>N(6)-succinyl-L-lysyl-[protein] + NAD(+) + H2O = 2''-O-succinyl-ADP-D-ribose + nicotinamide + L-lysyl-[protein]</text>
        <dbReference type="Rhea" id="RHEA:47668"/>
        <dbReference type="Rhea" id="RHEA-COMP:9752"/>
        <dbReference type="Rhea" id="RHEA-COMP:11877"/>
        <dbReference type="ChEBI" id="CHEBI:15377"/>
        <dbReference type="ChEBI" id="CHEBI:17154"/>
        <dbReference type="ChEBI" id="CHEBI:29969"/>
        <dbReference type="ChEBI" id="CHEBI:57540"/>
        <dbReference type="ChEBI" id="CHEBI:87830"/>
        <dbReference type="ChEBI" id="CHEBI:87832"/>
    </reaction>
</comment>
<comment type="cofactor">
    <cofactor evidence="1 4 5">
        <name>Zn(2+)</name>
        <dbReference type="ChEBI" id="CHEBI:29105"/>
    </cofactor>
    <text evidence="1 4 5">Binds 1 zinc ion per subunit.</text>
</comment>
<comment type="subcellular location">
    <subcellularLocation>
        <location evidence="1">Cytoplasm</location>
    </subcellularLocation>
</comment>
<comment type="domain">
    <text evidence="1">2 residues (Tyr-64 and Arg-67) present in a large hydrophobic pocket are probably involved in substrate specificity. They are important for desuccinylation activity, but dispensable for deacetylation activity.</text>
</comment>
<comment type="miscellaneous">
    <text evidence="7">The two SIR2 homologs in this organism, Af1 and Af2, display different substrate specificities in vitro. Af1 cannot deacetylate histones but does deacetylate BSA in a NAD-dependent manner (PubMed:11336676).</text>
</comment>
<comment type="similarity">
    <text evidence="1">Belongs to the sirtuin family. Class III subfamily.</text>
</comment>
<organism>
    <name type="scientific">Archaeoglobus fulgidus (strain ATCC 49558 / DSM 4304 / JCM 9628 / NBRC 100126 / VC-16)</name>
    <dbReference type="NCBI Taxonomy" id="224325"/>
    <lineage>
        <taxon>Archaea</taxon>
        <taxon>Methanobacteriati</taxon>
        <taxon>Methanobacteriota</taxon>
        <taxon>Archaeoglobi</taxon>
        <taxon>Archaeoglobales</taxon>
        <taxon>Archaeoglobaceae</taxon>
        <taxon>Archaeoglobus</taxon>
    </lineage>
</organism>
<gene>
    <name evidence="1" type="primary">cobB1</name>
    <name type="ordered locus">AF_1676</name>
</gene>
<keyword id="KW-0002">3D-structure</keyword>
<keyword id="KW-0963">Cytoplasm</keyword>
<keyword id="KW-0479">Metal-binding</keyword>
<keyword id="KW-0520">NAD</keyword>
<keyword id="KW-1185">Reference proteome</keyword>
<keyword id="KW-0804">Transcription</keyword>
<keyword id="KW-0805">Transcription regulation</keyword>
<keyword id="KW-0808">Transferase</keyword>
<keyword id="KW-0862">Zinc</keyword>
<accession>O28597</accession>
<protein>
    <recommendedName>
        <fullName evidence="1">NAD-dependent protein deacylase 1</fullName>
        <ecNumber evidence="1 2">2.3.1.286</ecNumber>
    </recommendedName>
    <alternativeName>
        <fullName evidence="1">Regulatory protein SIR2 homolog 1</fullName>
    </alternativeName>
    <alternativeName>
        <fullName>SIR2-Af1</fullName>
    </alternativeName>
</protein>
<sequence>MDEKLLKTIAESKYLVALTGAGVSAESGIPTFRGKDGLWNRYRPEELANPQAFAKDPEKVWKWYAWRMEKVFNAQPNKAHQAFAELERLGVLKCLITQNVDDLHERAGSRNVIHLHGSLRVVRCTSCNNSFEVESAPKIPPLPKCDKCGSLLRPGVVWFGEMLPPDVLDRAMREVERADVIIVAGTSAVVQPAASLPLIVKQRGGAIIEINPDETPLTPIADYSLRGKAGEVMDELVRHVRKALS</sequence>
<evidence type="ECO:0000255" key="1">
    <source>
        <dbReference type="HAMAP-Rule" id="MF_01121"/>
    </source>
</evidence>
<evidence type="ECO:0000255" key="2">
    <source>
        <dbReference type="PROSITE-ProRule" id="PRU00236"/>
    </source>
</evidence>
<evidence type="ECO:0000269" key="3">
    <source>
    </source>
</evidence>
<evidence type="ECO:0000269" key="4">
    <source>
    </source>
</evidence>
<evidence type="ECO:0000269" key="5">
    <source>
    </source>
</evidence>
<evidence type="ECO:0000269" key="6">
    <source>
    </source>
</evidence>
<evidence type="ECO:0000305" key="7">
    <source>
    </source>
</evidence>
<evidence type="ECO:0007829" key="8">
    <source>
        <dbReference type="PDB" id="1M2K"/>
    </source>
</evidence>
<evidence type="ECO:0007829" key="9">
    <source>
        <dbReference type="PDB" id="1M2N"/>
    </source>
</evidence>